<dbReference type="EC" id="1.16.1.9"/>
<dbReference type="EMBL" id="Z48239">
    <property type="protein sequence ID" value="CAA88276.1"/>
    <property type="status" value="ALT_FRAME"/>
    <property type="molecule type" value="Genomic_DNA"/>
</dbReference>
<dbReference type="EMBL" id="Z74894">
    <property type="protein sequence ID" value="CAA99174.1"/>
    <property type="status" value="ALT_FRAME"/>
    <property type="molecule type" value="Genomic_DNA"/>
</dbReference>
<dbReference type="EMBL" id="BK006948">
    <property type="protein sequence ID" value="DAA10634.1"/>
    <property type="molecule type" value="Genomic_DNA"/>
</dbReference>
<dbReference type="PIR" id="S60385">
    <property type="entry name" value="S60385"/>
</dbReference>
<dbReference type="RefSeq" id="NP_014489.2">
    <property type="nucleotide sequence ID" value="NM_001183406.1"/>
</dbReference>
<dbReference type="SMR" id="Q12333"/>
<dbReference type="BioGRID" id="34266">
    <property type="interactions" value="67"/>
</dbReference>
<dbReference type="DIP" id="DIP-3837N"/>
<dbReference type="FunCoup" id="Q12333">
    <property type="interactions" value="55"/>
</dbReference>
<dbReference type="MINT" id="Q12333"/>
<dbReference type="STRING" id="4932.YOL152W"/>
<dbReference type="iPTMnet" id="Q12333"/>
<dbReference type="PaxDb" id="4932-YOL152W"/>
<dbReference type="PeptideAtlas" id="Q12333"/>
<dbReference type="EnsemblFungi" id="YOL152W_mRNA">
    <property type="protein sequence ID" value="YOL152W"/>
    <property type="gene ID" value="YOL152W"/>
</dbReference>
<dbReference type="GeneID" id="854013"/>
<dbReference type="KEGG" id="sce:YOL152W"/>
<dbReference type="AGR" id="SGD:S000005512"/>
<dbReference type="SGD" id="S000005512">
    <property type="gene designation" value="FRE7"/>
</dbReference>
<dbReference type="VEuPathDB" id="FungiDB:YOL152W"/>
<dbReference type="eggNOG" id="KOG0039">
    <property type="taxonomic scope" value="Eukaryota"/>
</dbReference>
<dbReference type="GeneTree" id="ENSGT00940000176662"/>
<dbReference type="HOGENOM" id="CLU_010365_7_2_1"/>
<dbReference type="InParanoid" id="Q12333"/>
<dbReference type="OMA" id="PWLDQPV"/>
<dbReference type="OrthoDB" id="17725at2759"/>
<dbReference type="BioCyc" id="YEAST:G3O-33540-MONOMER"/>
<dbReference type="BioGRID-ORCS" id="854013">
    <property type="hits" value="0 hits in 10 CRISPR screens"/>
</dbReference>
<dbReference type="PRO" id="PR:Q12333"/>
<dbReference type="Proteomes" id="UP000002311">
    <property type="component" value="Chromosome XV"/>
</dbReference>
<dbReference type="RNAct" id="Q12333">
    <property type="molecule type" value="protein"/>
</dbReference>
<dbReference type="GO" id="GO:0005886">
    <property type="term" value="C:plasma membrane"/>
    <property type="evidence" value="ECO:0000314"/>
    <property type="project" value="SGD"/>
</dbReference>
<dbReference type="GO" id="GO:0052851">
    <property type="term" value="F:ferric-chelate reductase (NADPH) activity"/>
    <property type="evidence" value="ECO:0007669"/>
    <property type="project" value="UniProtKB-EC"/>
</dbReference>
<dbReference type="GO" id="GO:0000293">
    <property type="term" value="F:ferric-chelate reductase activity"/>
    <property type="evidence" value="ECO:0000314"/>
    <property type="project" value="SGD"/>
</dbReference>
<dbReference type="GO" id="GO:0046872">
    <property type="term" value="F:metal ion binding"/>
    <property type="evidence" value="ECO:0007669"/>
    <property type="project" value="UniProtKB-KW"/>
</dbReference>
<dbReference type="GO" id="GO:0016175">
    <property type="term" value="F:superoxide-generating NAD(P)H oxidase activity"/>
    <property type="evidence" value="ECO:0000318"/>
    <property type="project" value="GO_Central"/>
</dbReference>
<dbReference type="GO" id="GO:0015677">
    <property type="term" value="P:copper ion import"/>
    <property type="evidence" value="ECO:0000316"/>
    <property type="project" value="SGD"/>
</dbReference>
<dbReference type="GO" id="GO:0006826">
    <property type="term" value="P:iron ion transport"/>
    <property type="evidence" value="ECO:0000316"/>
    <property type="project" value="SGD"/>
</dbReference>
<dbReference type="GO" id="GO:0033215">
    <property type="term" value="P:reductive iron assimilation"/>
    <property type="evidence" value="ECO:0000318"/>
    <property type="project" value="GO_Central"/>
</dbReference>
<dbReference type="CDD" id="cd06186">
    <property type="entry name" value="NOX_Duox_like_FAD_NADP"/>
    <property type="match status" value="1"/>
</dbReference>
<dbReference type="FunFam" id="3.40.50.80:FF:000079">
    <property type="entry name" value="Fre7p"/>
    <property type="match status" value="1"/>
</dbReference>
<dbReference type="Gene3D" id="3.40.50.80">
    <property type="entry name" value="Nucleotide-binding domain of ferredoxin-NADP reductase (FNR) module"/>
    <property type="match status" value="1"/>
</dbReference>
<dbReference type="Gene3D" id="2.40.30.10">
    <property type="entry name" value="Translation factors"/>
    <property type="match status" value="1"/>
</dbReference>
<dbReference type="InterPro" id="IPR013112">
    <property type="entry name" value="FAD-bd_8"/>
</dbReference>
<dbReference type="InterPro" id="IPR017927">
    <property type="entry name" value="FAD-bd_FR_type"/>
</dbReference>
<dbReference type="InterPro" id="IPR013130">
    <property type="entry name" value="Fe3_Rdtase_TM_dom"/>
</dbReference>
<dbReference type="InterPro" id="IPR013121">
    <property type="entry name" value="Fe_red_NAD-bd_6"/>
</dbReference>
<dbReference type="InterPro" id="IPR051410">
    <property type="entry name" value="Ferric/Cupric_Reductase"/>
</dbReference>
<dbReference type="InterPro" id="IPR039261">
    <property type="entry name" value="FNR_nucleotide-bd"/>
</dbReference>
<dbReference type="InterPro" id="IPR017938">
    <property type="entry name" value="Riboflavin_synthase-like_b-brl"/>
</dbReference>
<dbReference type="PANTHER" id="PTHR32361:SF23">
    <property type="entry name" value="FERRIC-CHELATE REDUCTASE"/>
    <property type="match status" value="1"/>
</dbReference>
<dbReference type="PANTHER" id="PTHR32361">
    <property type="entry name" value="FERRIC/CUPRIC REDUCTASE TRANSMEMBRANE COMPONENT"/>
    <property type="match status" value="1"/>
</dbReference>
<dbReference type="Pfam" id="PF08022">
    <property type="entry name" value="FAD_binding_8"/>
    <property type="match status" value="1"/>
</dbReference>
<dbReference type="Pfam" id="PF01794">
    <property type="entry name" value="Ferric_reduct"/>
    <property type="match status" value="1"/>
</dbReference>
<dbReference type="Pfam" id="PF08030">
    <property type="entry name" value="NAD_binding_6"/>
    <property type="match status" value="1"/>
</dbReference>
<dbReference type="SFLD" id="SFLDF00464">
    <property type="entry name" value="Ferric/cupric_reductase"/>
    <property type="match status" value="1"/>
</dbReference>
<dbReference type="SFLD" id="SFLDS00052">
    <property type="entry name" value="Ferric_Reductase_Domain"/>
    <property type="match status" value="1"/>
</dbReference>
<dbReference type="SFLD" id="SFLDG01168">
    <property type="entry name" value="Ferric_reductase_subgroup_(FRE"/>
    <property type="match status" value="1"/>
</dbReference>
<dbReference type="SUPFAM" id="SSF52343">
    <property type="entry name" value="Ferredoxin reductase-like, C-terminal NADP-linked domain"/>
    <property type="match status" value="1"/>
</dbReference>
<dbReference type="SUPFAM" id="SSF63380">
    <property type="entry name" value="Riboflavin synthase domain-like"/>
    <property type="match status" value="1"/>
</dbReference>
<dbReference type="PROSITE" id="PS51384">
    <property type="entry name" value="FAD_FR"/>
    <property type="match status" value="1"/>
</dbReference>
<accession>Q12333</accession>
<accession>D6W1R8</accession>
<keyword id="KW-1003">Cell membrane</keyword>
<keyword id="KW-0186">Copper</keyword>
<keyword id="KW-0187">Copper transport</keyword>
<keyword id="KW-0249">Electron transport</keyword>
<keyword id="KW-0274">FAD</keyword>
<keyword id="KW-0285">Flavoprotein</keyword>
<keyword id="KW-0349">Heme</keyword>
<keyword id="KW-0406">Ion transport</keyword>
<keyword id="KW-0408">Iron</keyword>
<keyword id="KW-0410">Iron transport</keyword>
<keyword id="KW-0472">Membrane</keyword>
<keyword id="KW-0479">Metal-binding</keyword>
<keyword id="KW-0521">NADP</keyword>
<keyword id="KW-0560">Oxidoreductase</keyword>
<keyword id="KW-1185">Reference proteome</keyword>
<keyword id="KW-0812">Transmembrane</keyword>
<keyword id="KW-1133">Transmembrane helix</keyword>
<keyword id="KW-0813">Transport</keyword>
<reference key="1">
    <citation type="journal article" date="1995" name="Yeast">
        <title>DNA sequence analysis of a 13 kbp fragment of the left arm of yeast chromosome XV containing seven new open reading frames.</title>
        <authorList>
            <person name="Casamayor A."/>
            <person name="Aldea M."/>
            <person name="Casas C."/>
            <person name="Herrero E."/>
            <person name="Gamo F.-J."/>
            <person name="Lafuente M.J."/>
            <person name="Gancedo C."/>
            <person name="Arino J."/>
        </authorList>
    </citation>
    <scope>NUCLEOTIDE SEQUENCE [GENOMIC DNA]</scope>
    <source>
        <strain>ATCC 96604 / S288c / FY1679</strain>
    </source>
</reference>
<reference key="2">
    <citation type="journal article" date="1997" name="Nature">
        <title>The nucleotide sequence of Saccharomyces cerevisiae chromosome XV.</title>
        <authorList>
            <person name="Dujon B."/>
            <person name="Albermann K."/>
            <person name="Aldea M."/>
            <person name="Alexandraki D."/>
            <person name="Ansorge W."/>
            <person name="Arino J."/>
            <person name="Benes V."/>
            <person name="Bohn C."/>
            <person name="Bolotin-Fukuhara M."/>
            <person name="Bordonne R."/>
            <person name="Boyer J."/>
            <person name="Camasses A."/>
            <person name="Casamayor A."/>
            <person name="Casas C."/>
            <person name="Cheret G."/>
            <person name="Cziepluch C."/>
            <person name="Daignan-Fornier B."/>
            <person name="Dang V.-D."/>
            <person name="de Haan M."/>
            <person name="Delius H."/>
            <person name="Durand P."/>
            <person name="Fairhead C."/>
            <person name="Feldmann H."/>
            <person name="Gaillon L."/>
            <person name="Galisson F."/>
            <person name="Gamo F.-J."/>
            <person name="Gancedo C."/>
            <person name="Goffeau A."/>
            <person name="Goulding S.E."/>
            <person name="Grivell L.A."/>
            <person name="Habbig B."/>
            <person name="Hand N.J."/>
            <person name="Hani J."/>
            <person name="Hattenhorst U."/>
            <person name="Hebling U."/>
            <person name="Hernando Y."/>
            <person name="Herrero E."/>
            <person name="Heumann K."/>
            <person name="Hiesel R."/>
            <person name="Hilger F."/>
            <person name="Hofmann B."/>
            <person name="Hollenberg C.P."/>
            <person name="Hughes B."/>
            <person name="Jauniaux J.-C."/>
            <person name="Kalogeropoulos A."/>
            <person name="Katsoulou C."/>
            <person name="Kordes E."/>
            <person name="Lafuente M.J."/>
            <person name="Landt O."/>
            <person name="Louis E.J."/>
            <person name="Maarse A.C."/>
            <person name="Madania A."/>
            <person name="Mannhaupt G."/>
            <person name="Marck C."/>
            <person name="Martin R.P."/>
            <person name="Mewes H.-W."/>
            <person name="Michaux G."/>
            <person name="Paces V."/>
            <person name="Parle-McDermott A.G."/>
            <person name="Pearson B.M."/>
            <person name="Perrin A."/>
            <person name="Pettersson B."/>
            <person name="Poch O."/>
            <person name="Pohl T.M."/>
            <person name="Poirey R."/>
            <person name="Portetelle D."/>
            <person name="Pujol A."/>
            <person name="Purnelle B."/>
            <person name="Ramezani Rad M."/>
            <person name="Rechmann S."/>
            <person name="Schwager C."/>
            <person name="Schweizer M."/>
            <person name="Sor F."/>
            <person name="Sterky F."/>
            <person name="Tarassov I.A."/>
            <person name="Teodoru C."/>
            <person name="Tettelin H."/>
            <person name="Thierry A."/>
            <person name="Tobiasch E."/>
            <person name="Tzermia M."/>
            <person name="Uhlen M."/>
            <person name="Unseld M."/>
            <person name="Valens M."/>
            <person name="Vandenbol M."/>
            <person name="Vetter I."/>
            <person name="Vlcek C."/>
            <person name="Voet M."/>
            <person name="Volckaert G."/>
            <person name="Voss H."/>
            <person name="Wambutt R."/>
            <person name="Wedler H."/>
            <person name="Wiemann S."/>
            <person name="Winsor B."/>
            <person name="Wolfe K.H."/>
            <person name="Zollner A."/>
            <person name="Zumstein E."/>
            <person name="Kleine K."/>
        </authorList>
    </citation>
    <scope>NUCLEOTIDE SEQUENCE [LARGE SCALE GENOMIC DNA]</scope>
    <source>
        <strain>ATCC 204508 / S288c</strain>
    </source>
</reference>
<reference key="3">
    <citation type="journal article" date="2014" name="G3 (Bethesda)">
        <title>The reference genome sequence of Saccharomyces cerevisiae: Then and now.</title>
        <authorList>
            <person name="Engel S.R."/>
            <person name="Dietrich F.S."/>
            <person name="Fisk D.G."/>
            <person name="Binkley G."/>
            <person name="Balakrishnan R."/>
            <person name="Costanzo M.C."/>
            <person name="Dwight S.S."/>
            <person name="Hitz B.C."/>
            <person name="Karra K."/>
            <person name="Nash R.S."/>
            <person name="Weng S."/>
            <person name="Wong E.D."/>
            <person name="Lloyd P."/>
            <person name="Skrzypek M.S."/>
            <person name="Miyasato S.R."/>
            <person name="Simison M."/>
            <person name="Cherry J.M."/>
        </authorList>
    </citation>
    <scope>GENOME REANNOTATION</scope>
    <source>
        <strain>ATCC 204508 / S288c</strain>
    </source>
</reference>
<reference key="4">
    <citation type="journal article" date="1997" name="Yeast">
        <title>The AFT1 transcriptional factor is differentially required for expression of high-affinity iron uptake genes in Saccharomyces cerevisiae.</title>
        <authorList>
            <person name="Casas C."/>
            <person name="Aldea M."/>
            <person name="Espinet C."/>
            <person name="Gallego C."/>
            <person name="Gil R."/>
            <person name="Herrero E."/>
        </authorList>
    </citation>
    <scope>INDUCTION</scope>
</reference>
<reference key="5">
    <citation type="journal article" date="1998" name="J. Biol. Chem.">
        <title>Metalloregulation of FRE1 and FRE2 homologs in Saccharomyces cerevisiae.</title>
        <authorList>
            <person name="Martins L.J."/>
            <person name="Jensen L.T."/>
            <person name="Simon J.R."/>
            <person name="Keller G.L."/>
            <person name="Winge D.R."/>
        </authorList>
    </citation>
    <scope>INDUCTION</scope>
</reference>
<reference key="6">
    <citation type="journal article" date="1998" name="J. Biol. Chem.">
        <authorList>
            <person name="Martins L.J."/>
            <person name="Jensen L.T."/>
            <person name="Simon J.R."/>
            <person name="Keller G.L."/>
            <person name="Winge D.R."/>
        </authorList>
    </citation>
    <scope>ERRATUM OF PUBMED:9726978</scope>
</reference>
<reference key="7">
    <citation type="journal article" date="1999" name="Yeast">
        <title>Regulated expression of the Saccharomyces cerevisiae Fre1p/Fre2p Fe/Cu reductase related genes.</title>
        <authorList>
            <person name="Georgatsou E."/>
            <person name="Alexandraki D."/>
        </authorList>
    </citation>
    <scope>INDUCTION</scope>
</reference>
<reference key="8">
    <citation type="journal article" date="2007" name="J. Biol. Chem.">
        <title>Identification of a vacuole-associated metalloreductase and its role in Ctr2-mediated intracellular copper mobilization.</title>
        <authorList>
            <person name="Rees E.M."/>
            <person name="Thiele D.J."/>
        </authorList>
    </citation>
    <scope>FUNCTION AS A REDUCTASE</scope>
    <scope>SUBCELLULAR LOCATION</scope>
</reference>
<reference key="9">
    <citation type="journal article" date="2007" name="J. Biol. Chem.">
        <title>The metalloreductase Fre6p in Fe-efflux from the yeast vacuole.</title>
        <authorList>
            <person name="Singh A."/>
            <person name="Kaur N."/>
            <person name="Kosman D.J."/>
        </authorList>
    </citation>
    <scope>FUNCTION AS A REDUCTASE</scope>
</reference>
<feature type="chain" id="PRO_0000210150" description="Ferric/cupric reductase transmembrane component 7">
    <location>
        <begin position="1"/>
        <end position="620"/>
    </location>
</feature>
<feature type="topological domain" description="Extracellular" evidence="1">
    <location>
        <begin position="1"/>
        <end position="45"/>
    </location>
</feature>
<feature type="transmembrane region" description="Helical; Name=1" evidence="2">
    <location>
        <begin position="46"/>
        <end position="66"/>
    </location>
</feature>
<feature type="topological domain" description="Cytoplasmic" evidence="1">
    <location>
        <begin position="67"/>
        <end position="107"/>
    </location>
</feature>
<feature type="transmembrane region" description="Helical; Name=2" evidence="2">
    <location>
        <begin position="108"/>
        <end position="128"/>
    </location>
</feature>
<feature type="topological domain" description="Extracellular" evidence="1">
    <location>
        <begin position="129"/>
        <end position="167"/>
    </location>
</feature>
<feature type="transmembrane region" description="Helical; Name=3" evidence="2">
    <location>
        <begin position="168"/>
        <end position="188"/>
    </location>
</feature>
<feature type="topological domain" description="Cytoplasmic" evidence="1">
    <location>
        <begin position="189"/>
        <end position="194"/>
    </location>
</feature>
<feature type="transmembrane region" description="Helical; Name=4" evidence="2">
    <location>
        <begin position="195"/>
        <end position="215"/>
    </location>
</feature>
<feature type="topological domain" description="Extracellular" evidence="1">
    <location>
        <begin position="216"/>
        <end position="237"/>
    </location>
</feature>
<feature type="transmembrane region" description="Helical; Name=5" evidence="2">
    <location>
        <begin position="238"/>
        <end position="258"/>
    </location>
</feature>
<feature type="topological domain" description="Cytoplasmic" evidence="1">
    <location>
        <begin position="259"/>
        <end position="265"/>
    </location>
</feature>
<feature type="transmembrane region" description="Helical; Name=6" evidence="2">
    <location>
        <begin position="266"/>
        <end position="286"/>
    </location>
</feature>
<feature type="topological domain" description="Extracellular" evidence="1">
    <location>
        <begin position="287"/>
        <end position="292"/>
    </location>
</feature>
<feature type="transmembrane region" description="Helical; Name=7" evidence="2">
    <location>
        <begin position="293"/>
        <end position="313"/>
    </location>
</feature>
<feature type="topological domain" description="Cytoplasmic" evidence="1">
    <location>
        <begin position="314"/>
        <end position="620"/>
    </location>
</feature>
<feature type="domain" description="Ferric oxidoreductase">
    <location>
        <begin position="161"/>
        <end position="320"/>
    </location>
</feature>
<feature type="domain" description="FAD-binding FR-type" evidence="3">
    <location>
        <begin position="321"/>
        <end position="419"/>
    </location>
</feature>
<feature type="region of interest" description="Disordered" evidence="4">
    <location>
        <begin position="519"/>
        <end position="543"/>
    </location>
</feature>
<feature type="compositionally biased region" description="Basic and acidic residues" evidence="4">
    <location>
        <begin position="523"/>
        <end position="532"/>
    </location>
</feature>
<feature type="binding site" description="axial binding residue" evidence="1">
    <location>
        <position position="197"/>
    </location>
    <ligand>
        <name>heme</name>
        <dbReference type="ChEBI" id="CHEBI:30413"/>
        <label>1</label>
    </ligand>
    <ligandPart>
        <name>Fe</name>
        <dbReference type="ChEBI" id="CHEBI:18248"/>
    </ligandPart>
</feature>
<feature type="binding site" description="axial binding residue" evidence="1">
    <location>
        <position position="211"/>
    </location>
    <ligand>
        <name>heme</name>
        <dbReference type="ChEBI" id="CHEBI:30413"/>
        <label>2</label>
    </ligand>
    <ligandPart>
        <name>Fe</name>
        <dbReference type="ChEBI" id="CHEBI:18248"/>
    </ligandPart>
</feature>
<feature type="binding site" description="axial binding residue" evidence="1">
    <location>
        <position position="271"/>
    </location>
    <ligand>
        <name>heme</name>
        <dbReference type="ChEBI" id="CHEBI:30413"/>
        <label>1</label>
    </ligand>
    <ligandPart>
        <name>Fe</name>
        <dbReference type="ChEBI" id="CHEBI:18248"/>
    </ligandPart>
</feature>
<feature type="binding site" description="axial binding residue" evidence="1">
    <location>
        <position position="285"/>
    </location>
    <ligand>
        <name>heme</name>
        <dbReference type="ChEBI" id="CHEBI:30413"/>
        <label>2</label>
    </ligand>
    <ligandPart>
        <name>Fe</name>
        <dbReference type="ChEBI" id="CHEBI:18248"/>
    </ligandPart>
</feature>
<feature type="binding site" evidence="2">
    <location>
        <begin position="369"/>
        <end position="375"/>
    </location>
    <ligand>
        <name>FAD</name>
        <dbReference type="ChEBI" id="CHEBI:57692"/>
    </ligand>
</feature>
<feature type="binding site" evidence="2">
    <location>
        <begin position="411"/>
        <end position="414"/>
    </location>
    <ligand>
        <name>NADP(+)</name>
        <dbReference type="ChEBI" id="CHEBI:58349"/>
    </ligand>
</feature>
<feature type="binding site" evidence="2">
    <location>
        <begin position="578"/>
        <end position="579"/>
    </location>
    <ligand>
        <name>NADP(+)</name>
        <dbReference type="ChEBI" id="CHEBI:58349"/>
    </ligand>
</feature>
<comment type="function">
    <text evidence="6 7">Cell surface metalloreductase. May be involved in copper homeostasis.</text>
</comment>
<comment type="catalytic activity">
    <reaction>
        <text>2 a Fe(II)-siderophore + NADP(+) + H(+) = 2 a Fe(III)-siderophore + NADPH</text>
        <dbReference type="Rhea" id="RHEA:28795"/>
        <dbReference type="Rhea" id="RHEA-COMP:11342"/>
        <dbReference type="Rhea" id="RHEA-COMP:11344"/>
        <dbReference type="ChEBI" id="CHEBI:15378"/>
        <dbReference type="ChEBI" id="CHEBI:29033"/>
        <dbReference type="ChEBI" id="CHEBI:29034"/>
        <dbReference type="ChEBI" id="CHEBI:57783"/>
        <dbReference type="ChEBI" id="CHEBI:58349"/>
        <dbReference type="EC" id="1.16.1.9"/>
    </reaction>
</comment>
<comment type="cofactor">
    <cofactor evidence="10">
        <name>FAD</name>
        <dbReference type="ChEBI" id="CHEBI:57692"/>
    </cofactor>
</comment>
<comment type="subcellular location">
    <subcellularLocation>
        <location evidence="6">Cell membrane</location>
        <topology evidence="6">Multi-pass membrane protein</topology>
    </subcellularLocation>
</comment>
<comment type="induction">
    <text evidence="5 8 9">By transcription factor MAC1 upon copper deprivation.</text>
</comment>
<comment type="similarity">
    <text evidence="10">Belongs to the ferric reductase (FRE) family.</text>
</comment>
<comment type="sequence caution" evidence="10">
    <conflict type="frameshift">
        <sequence resource="EMBL-CDS" id="CAA88276"/>
    </conflict>
</comment>
<comment type="sequence caution" evidence="10">
    <conflict type="frameshift">
        <sequence resource="EMBL-CDS" id="CAA99174"/>
    </conflict>
</comment>
<organism>
    <name type="scientific">Saccharomyces cerevisiae (strain ATCC 204508 / S288c)</name>
    <name type="common">Baker's yeast</name>
    <dbReference type="NCBI Taxonomy" id="559292"/>
    <lineage>
        <taxon>Eukaryota</taxon>
        <taxon>Fungi</taxon>
        <taxon>Dikarya</taxon>
        <taxon>Ascomycota</taxon>
        <taxon>Saccharomycotina</taxon>
        <taxon>Saccharomycetes</taxon>
        <taxon>Saccharomycetales</taxon>
        <taxon>Saccharomycetaceae</taxon>
        <taxon>Saccharomyces</taxon>
    </lineage>
</organism>
<evidence type="ECO:0000250" key="1"/>
<evidence type="ECO:0000255" key="2"/>
<evidence type="ECO:0000255" key="3">
    <source>
        <dbReference type="PROSITE-ProRule" id="PRU00716"/>
    </source>
</evidence>
<evidence type="ECO:0000256" key="4">
    <source>
        <dbReference type="SAM" id="MobiDB-lite"/>
    </source>
</evidence>
<evidence type="ECO:0000269" key="5">
    <source>
    </source>
</evidence>
<evidence type="ECO:0000269" key="6">
    <source>
    </source>
</evidence>
<evidence type="ECO:0000269" key="7">
    <source>
    </source>
</evidence>
<evidence type="ECO:0000269" key="8">
    <source>
    </source>
</evidence>
<evidence type="ECO:0000269" key="9">
    <source>
    </source>
</evidence>
<evidence type="ECO:0000305" key="10"/>
<proteinExistence type="evidence at protein level"/>
<gene>
    <name type="primary">FRE7</name>
    <name type="ordered locus">YOL152W</name>
    <name type="ORF">AOB629</name>
</gene>
<protein>
    <recommendedName>
        <fullName>Ferric/cupric reductase transmembrane component 7</fullName>
        <ecNumber>1.16.1.9</ecNumber>
    </recommendedName>
    <alternativeName>
        <fullName>Ferric-chelate reductase 7</fullName>
    </alternativeName>
</protein>
<name>FRE7_YEAST</name>
<sequence>MIEERDLVLSNGIHCIADIHSELYARLKKESQAATPWVYQKQYGKFVTYFVAVIIFLSLIKKLAFMYYDSSEEFLPEKKNSPTTPSVFLARIMTKLVAFNRYICYRKFPTLIFSYLGIPTSVGTFLVVMATTLYTLLYCFVPHPFYRPCAGFGSPPLSVRAGIMAISLVPFVFSLSGKINVIGWLVGLSYEKINIYHQWASILCLFFSWVHVIPFLRQARHEGGYERMHQRWKASDMWRSGVPPILFLNLLWLSSLPIARRHFYEIFLQLHWILAVGFYISLFYHVYPELNSHMYLVATIVVWFAQLFYRLAVKGYLRPGRSFMASTIANVSIVGEGCVELIVKDVEMAYSPGQHIFVRTIDKGIISNHPFSIFPSAKYPGGIKMLIRAQKGFSKRLYESNDDMKKILIDGPYGGIERDIRSFTNVYLICSGSGISTCLPFLQKYGPILHKTNLEVITLDWVVRHREDISWIRDEMCTLSNNLRQLFLDGKIVVRIYVCSDSTVPGIIKTFPQTIDTASDQSDLAKREKDTEFGQDDTESNSTFDKSNNEYKGLITIIPSKPDLNQVINDYQIGFRNCFICSGSDSLRYTVGNSVAGLQAKVFSNKNVEECYLHSESFGY</sequence>